<organism>
    <name type="scientific">Koribacter versatilis (strain Ellin345)</name>
    <dbReference type="NCBI Taxonomy" id="204669"/>
    <lineage>
        <taxon>Bacteria</taxon>
        <taxon>Pseudomonadati</taxon>
        <taxon>Acidobacteriota</taxon>
        <taxon>Terriglobia</taxon>
        <taxon>Terriglobales</taxon>
        <taxon>Candidatus Korobacteraceae</taxon>
        <taxon>Candidatus Korobacter</taxon>
    </lineage>
</organism>
<gene>
    <name evidence="1" type="primary">rimO</name>
    <name type="ordered locus">Acid345_2144</name>
</gene>
<proteinExistence type="inferred from homology"/>
<protein>
    <recommendedName>
        <fullName evidence="1">Ribosomal protein uS12 methylthiotransferase RimO</fullName>
        <shortName evidence="1">uS12 MTTase</shortName>
        <shortName evidence="1">uS12 methylthiotransferase</shortName>
        <ecNumber evidence="1">2.8.4.4</ecNumber>
    </recommendedName>
    <alternativeName>
        <fullName evidence="1">Ribosomal protein uS12 (aspartate-C(3))-methylthiotransferase</fullName>
    </alternativeName>
    <alternativeName>
        <fullName evidence="1">Ribosome maturation factor RimO</fullName>
    </alternativeName>
</protein>
<reference key="1">
    <citation type="journal article" date="2009" name="Appl. Environ. Microbiol.">
        <title>Three genomes from the phylum Acidobacteria provide insight into the lifestyles of these microorganisms in soils.</title>
        <authorList>
            <person name="Ward N.L."/>
            <person name="Challacombe J.F."/>
            <person name="Janssen P.H."/>
            <person name="Henrissat B."/>
            <person name="Coutinho P.M."/>
            <person name="Wu M."/>
            <person name="Xie G."/>
            <person name="Haft D.H."/>
            <person name="Sait M."/>
            <person name="Badger J."/>
            <person name="Barabote R.D."/>
            <person name="Bradley B."/>
            <person name="Brettin T.S."/>
            <person name="Brinkac L.M."/>
            <person name="Bruce D."/>
            <person name="Creasy T."/>
            <person name="Daugherty S.C."/>
            <person name="Davidsen T.M."/>
            <person name="DeBoy R.T."/>
            <person name="Detter J.C."/>
            <person name="Dodson R.J."/>
            <person name="Durkin A.S."/>
            <person name="Ganapathy A."/>
            <person name="Gwinn-Giglio M."/>
            <person name="Han C.S."/>
            <person name="Khouri H."/>
            <person name="Kiss H."/>
            <person name="Kothari S.P."/>
            <person name="Madupu R."/>
            <person name="Nelson K.E."/>
            <person name="Nelson W.C."/>
            <person name="Paulsen I."/>
            <person name="Penn K."/>
            <person name="Ren Q."/>
            <person name="Rosovitz M.J."/>
            <person name="Selengut J.D."/>
            <person name="Shrivastava S."/>
            <person name="Sullivan S.A."/>
            <person name="Tapia R."/>
            <person name="Thompson L.S."/>
            <person name="Watkins K.L."/>
            <person name="Yang Q."/>
            <person name="Yu C."/>
            <person name="Zafar N."/>
            <person name="Zhou L."/>
            <person name="Kuske C.R."/>
        </authorList>
    </citation>
    <scope>NUCLEOTIDE SEQUENCE [LARGE SCALE GENOMIC DNA]</scope>
    <source>
        <strain>Ellin345</strain>
    </source>
</reference>
<accession>Q1IPQ5</accession>
<evidence type="ECO:0000255" key="1">
    <source>
        <dbReference type="HAMAP-Rule" id="MF_01865"/>
    </source>
</evidence>
<evidence type="ECO:0000255" key="2">
    <source>
        <dbReference type="PROSITE-ProRule" id="PRU01266"/>
    </source>
</evidence>
<keyword id="KW-0004">4Fe-4S</keyword>
<keyword id="KW-0963">Cytoplasm</keyword>
<keyword id="KW-0408">Iron</keyword>
<keyword id="KW-0411">Iron-sulfur</keyword>
<keyword id="KW-0479">Metal-binding</keyword>
<keyword id="KW-1185">Reference proteome</keyword>
<keyword id="KW-0949">S-adenosyl-L-methionine</keyword>
<keyword id="KW-0808">Transferase</keyword>
<comment type="function">
    <text evidence="1">Catalyzes the methylthiolation of an aspartic acid residue of ribosomal protein uS12.</text>
</comment>
<comment type="catalytic activity">
    <reaction evidence="1">
        <text>L-aspartate(89)-[ribosomal protein uS12]-hydrogen + (sulfur carrier)-SH + AH2 + 2 S-adenosyl-L-methionine = 3-methylsulfanyl-L-aspartate(89)-[ribosomal protein uS12]-hydrogen + (sulfur carrier)-H + 5'-deoxyadenosine + L-methionine + A + S-adenosyl-L-homocysteine + 2 H(+)</text>
        <dbReference type="Rhea" id="RHEA:37087"/>
        <dbReference type="Rhea" id="RHEA-COMP:10460"/>
        <dbReference type="Rhea" id="RHEA-COMP:10461"/>
        <dbReference type="Rhea" id="RHEA-COMP:14737"/>
        <dbReference type="Rhea" id="RHEA-COMP:14739"/>
        <dbReference type="ChEBI" id="CHEBI:13193"/>
        <dbReference type="ChEBI" id="CHEBI:15378"/>
        <dbReference type="ChEBI" id="CHEBI:17319"/>
        <dbReference type="ChEBI" id="CHEBI:17499"/>
        <dbReference type="ChEBI" id="CHEBI:29917"/>
        <dbReference type="ChEBI" id="CHEBI:29961"/>
        <dbReference type="ChEBI" id="CHEBI:57844"/>
        <dbReference type="ChEBI" id="CHEBI:57856"/>
        <dbReference type="ChEBI" id="CHEBI:59789"/>
        <dbReference type="ChEBI" id="CHEBI:64428"/>
        <dbReference type="ChEBI" id="CHEBI:73599"/>
        <dbReference type="EC" id="2.8.4.4"/>
    </reaction>
</comment>
<comment type="cofactor">
    <cofactor evidence="1">
        <name>[4Fe-4S] cluster</name>
        <dbReference type="ChEBI" id="CHEBI:49883"/>
    </cofactor>
    <text evidence="1">Binds 2 [4Fe-4S] clusters. One cluster is coordinated with 3 cysteines and an exchangeable S-adenosyl-L-methionine.</text>
</comment>
<comment type="subcellular location">
    <subcellularLocation>
        <location evidence="1">Cytoplasm</location>
    </subcellularLocation>
</comment>
<comment type="similarity">
    <text evidence="1">Belongs to the methylthiotransferase family. RimO subfamily.</text>
</comment>
<sequence>MPETKSSVSTLEQPETKPKKVGFVSLGCPKNLVDSEVMMGLLATNGAEITARAEDADIIVVNTCSFIDTAKQESVDTILEMAGHKATGRAQKLIVAGCLVERYRNEIQKNIPEVDAVVGTGELEAILAASGIEPRKSEANSPFVILNSTSASQQLKSGIADRPEGAAREEAGRFARTDWDGAVADLPNYLYDENTPRVLATPKYMAYIKVAEGCDHPCSFCIIPQLRGKFRSRRFESVVAEAERLAKQGVKEITLIGQDTTCYGEDLGLKDGLAQLLERLAQIEELQWVRFLYAYPNKITKRLLQTIADNPKIPKYMDVPLQHSAANVLKRMKRGAHGDIFLKSIEEMRRVIPDLTLRTSFIVGFPGETEEDFNQLCEFVKAAQIDWLGVFSYSDEEGAKAFALDEKVPPREIERRRKKLMSLQKQISKKKRKALIGREFDVILEGPSEETDLLWEGRTAMHAPEIDGKVYINDFAEHENVEPGQVFRCEITEAHDYDLVARLL</sequence>
<dbReference type="EC" id="2.8.4.4" evidence="1"/>
<dbReference type="EMBL" id="CP000360">
    <property type="protein sequence ID" value="ABF41145.1"/>
    <property type="molecule type" value="Genomic_DNA"/>
</dbReference>
<dbReference type="RefSeq" id="WP_011522946.1">
    <property type="nucleotide sequence ID" value="NC_008009.1"/>
</dbReference>
<dbReference type="SMR" id="Q1IPQ5"/>
<dbReference type="STRING" id="204669.Acid345_2144"/>
<dbReference type="EnsemblBacteria" id="ABF41145">
    <property type="protein sequence ID" value="ABF41145"/>
    <property type="gene ID" value="Acid345_2144"/>
</dbReference>
<dbReference type="KEGG" id="aba:Acid345_2144"/>
<dbReference type="eggNOG" id="COG0621">
    <property type="taxonomic scope" value="Bacteria"/>
</dbReference>
<dbReference type="HOGENOM" id="CLU_018697_0_1_0"/>
<dbReference type="OrthoDB" id="9805215at2"/>
<dbReference type="Proteomes" id="UP000002432">
    <property type="component" value="Chromosome"/>
</dbReference>
<dbReference type="GO" id="GO:0005829">
    <property type="term" value="C:cytosol"/>
    <property type="evidence" value="ECO:0007669"/>
    <property type="project" value="TreeGrafter"/>
</dbReference>
<dbReference type="GO" id="GO:0051539">
    <property type="term" value="F:4 iron, 4 sulfur cluster binding"/>
    <property type="evidence" value="ECO:0007669"/>
    <property type="project" value="UniProtKB-UniRule"/>
</dbReference>
<dbReference type="GO" id="GO:0035599">
    <property type="term" value="F:aspartic acid methylthiotransferase activity"/>
    <property type="evidence" value="ECO:0007669"/>
    <property type="project" value="TreeGrafter"/>
</dbReference>
<dbReference type="GO" id="GO:0046872">
    <property type="term" value="F:metal ion binding"/>
    <property type="evidence" value="ECO:0007669"/>
    <property type="project" value="UniProtKB-KW"/>
</dbReference>
<dbReference type="GO" id="GO:0103039">
    <property type="term" value="F:protein methylthiotransferase activity"/>
    <property type="evidence" value="ECO:0007669"/>
    <property type="project" value="UniProtKB-EC"/>
</dbReference>
<dbReference type="GO" id="GO:0006400">
    <property type="term" value="P:tRNA modification"/>
    <property type="evidence" value="ECO:0007669"/>
    <property type="project" value="InterPro"/>
</dbReference>
<dbReference type="CDD" id="cd01335">
    <property type="entry name" value="Radical_SAM"/>
    <property type="match status" value="1"/>
</dbReference>
<dbReference type="FunFam" id="3.80.30.20:FF:000001">
    <property type="entry name" value="tRNA-2-methylthio-N(6)-dimethylallyladenosine synthase 2"/>
    <property type="match status" value="1"/>
</dbReference>
<dbReference type="Gene3D" id="3.40.50.12160">
    <property type="entry name" value="Methylthiotransferase, N-terminal domain"/>
    <property type="match status" value="1"/>
</dbReference>
<dbReference type="Gene3D" id="2.40.50.140">
    <property type="entry name" value="Nucleic acid-binding proteins"/>
    <property type="match status" value="1"/>
</dbReference>
<dbReference type="Gene3D" id="3.80.30.20">
    <property type="entry name" value="tm_1862 like domain"/>
    <property type="match status" value="1"/>
</dbReference>
<dbReference type="HAMAP" id="MF_01865">
    <property type="entry name" value="MTTase_RimO"/>
    <property type="match status" value="1"/>
</dbReference>
<dbReference type="InterPro" id="IPR006638">
    <property type="entry name" value="Elp3/MiaA/NifB-like_rSAM"/>
</dbReference>
<dbReference type="InterPro" id="IPR005839">
    <property type="entry name" value="Methylthiotransferase"/>
</dbReference>
<dbReference type="InterPro" id="IPR020612">
    <property type="entry name" value="Methylthiotransferase_CS"/>
</dbReference>
<dbReference type="InterPro" id="IPR013848">
    <property type="entry name" value="Methylthiotransferase_N"/>
</dbReference>
<dbReference type="InterPro" id="IPR038135">
    <property type="entry name" value="Methylthiotransferase_N_sf"/>
</dbReference>
<dbReference type="InterPro" id="IPR012340">
    <property type="entry name" value="NA-bd_OB-fold"/>
</dbReference>
<dbReference type="InterPro" id="IPR005840">
    <property type="entry name" value="Ribosomal_uS12_MeSTrfase_RimO"/>
</dbReference>
<dbReference type="InterPro" id="IPR007197">
    <property type="entry name" value="rSAM"/>
</dbReference>
<dbReference type="InterPro" id="IPR023404">
    <property type="entry name" value="rSAM_horseshoe"/>
</dbReference>
<dbReference type="InterPro" id="IPR002792">
    <property type="entry name" value="TRAM_dom"/>
</dbReference>
<dbReference type="NCBIfam" id="TIGR01125">
    <property type="entry name" value="30S ribosomal protein S12 methylthiotransferase RimO"/>
    <property type="match status" value="1"/>
</dbReference>
<dbReference type="NCBIfam" id="TIGR00089">
    <property type="entry name" value="MiaB/RimO family radical SAM methylthiotransferase"/>
    <property type="match status" value="1"/>
</dbReference>
<dbReference type="PANTHER" id="PTHR43837">
    <property type="entry name" value="RIBOSOMAL PROTEIN S12 METHYLTHIOTRANSFERASE RIMO"/>
    <property type="match status" value="1"/>
</dbReference>
<dbReference type="PANTHER" id="PTHR43837:SF1">
    <property type="entry name" value="RIBOSOMAL PROTEIN US12 METHYLTHIOTRANSFERASE RIMO"/>
    <property type="match status" value="1"/>
</dbReference>
<dbReference type="Pfam" id="PF04055">
    <property type="entry name" value="Radical_SAM"/>
    <property type="match status" value="1"/>
</dbReference>
<dbReference type="Pfam" id="PF18693">
    <property type="entry name" value="TRAM_2"/>
    <property type="match status" value="1"/>
</dbReference>
<dbReference type="Pfam" id="PF00919">
    <property type="entry name" value="UPF0004"/>
    <property type="match status" value="1"/>
</dbReference>
<dbReference type="SFLD" id="SFLDG01082">
    <property type="entry name" value="B12-binding_domain_containing"/>
    <property type="match status" value="1"/>
</dbReference>
<dbReference type="SFLD" id="SFLDS00029">
    <property type="entry name" value="Radical_SAM"/>
    <property type="match status" value="1"/>
</dbReference>
<dbReference type="SFLD" id="SFLDF00274">
    <property type="entry name" value="ribosomal_protein_S12_methylth"/>
    <property type="match status" value="1"/>
</dbReference>
<dbReference type="SMART" id="SM00729">
    <property type="entry name" value="Elp3"/>
    <property type="match status" value="1"/>
</dbReference>
<dbReference type="SUPFAM" id="SSF102114">
    <property type="entry name" value="Radical SAM enzymes"/>
    <property type="match status" value="1"/>
</dbReference>
<dbReference type="PROSITE" id="PS51449">
    <property type="entry name" value="MTTASE_N"/>
    <property type="match status" value="1"/>
</dbReference>
<dbReference type="PROSITE" id="PS01278">
    <property type="entry name" value="MTTASE_RADICAL"/>
    <property type="match status" value="1"/>
</dbReference>
<dbReference type="PROSITE" id="PS51918">
    <property type="entry name" value="RADICAL_SAM"/>
    <property type="match status" value="1"/>
</dbReference>
<dbReference type="PROSITE" id="PS50926">
    <property type="entry name" value="TRAM"/>
    <property type="match status" value="1"/>
</dbReference>
<feature type="chain" id="PRO_0000374674" description="Ribosomal protein uS12 methylthiotransferase RimO">
    <location>
        <begin position="1"/>
        <end position="504"/>
    </location>
</feature>
<feature type="domain" description="MTTase N-terminal" evidence="1">
    <location>
        <begin position="19"/>
        <end position="135"/>
    </location>
</feature>
<feature type="domain" description="Radical SAM core" evidence="2">
    <location>
        <begin position="200"/>
        <end position="430"/>
    </location>
</feature>
<feature type="domain" description="TRAM" evidence="1">
    <location>
        <begin position="433"/>
        <end position="504"/>
    </location>
</feature>
<feature type="binding site" evidence="1">
    <location>
        <position position="28"/>
    </location>
    <ligand>
        <name>[4Fe-4S] cluster</name>
        <dbReference type="ChEBI" id="CHEBI:49883"/>
        <label>1</label>
    </ligand>
</feature>
<feature type="binding site" evidence="1">
    <location>
        <position position="64"/>
    </location>
    <ligand>
        <name>[4Fe-4S] cluster</name>
        <dbReference type="ChEBI" id="CHEBI:49883"/>
        <label>1</label>
    </ligand>
</feature>
<feature type="binding site" evidence="1">
    <location>
        <position position="98"/>
    </location>
    <ligand>
        <name>[4Fe-4S] cluster</name>
        <dbReference type="ChEBI" id="CHEBI:49883"/>
        <label>1</label>
    </ligand>
</feature>
<feature type="binding site" evidence="1">
    <location>
        <position position="214"/>
    </location>
    <ligand>
        <name>[4Fe-4S] cluster</name>
        <dbReference type="ChEBI" id="CHEBI:49883"/>
        <label>2</label>
        <note>4Fe-4S-S-AdoMet</note>
    </ligand>
</feature>
<feature type="binding site" evidence="1">
    <location>
        <position position="218"/>
    </location>
    <ligand>
        <name>[4Fe-4S] cluster</name>
        <dbReference type="ChEBI" id="CHEBI:49883"/>
        <label>2</label>
        <note>4Fe-4S-S-AdoMet</note>
    </ligand>
</feature>
<feature type="binding site" evidence="1">
    <location>
        <position position="221"/>
    </location>
    <ligand>
        <name>[4Fe-4S] cluster</name>
        <dbReference type="ChEBI" id="CHEBI:49883"/>
        <label>2</label>
        <note>4Fe-4S-S-AdoMet</note>
    </ligand>
</feature>
<name>RIMO_KORVE</name>